<name>Y1842_PEDPA</name>
<reference key="1">
    <citation type="journal article" date="2006" name="Proc. Natl. Acad. Sci. U.S.A.">
        <title>Comparative genomics of the lactic acid bacteria.</title>
        <authorList>
            <person name="Makarova K.S."/>
            <person name="Slesarev A."/>
            <person name="Wolf Y.I."/>
            <person name="Sorokin A."/>
            <person name="Mirkin B."/>
            <person name="Koonin E.V."/>
            <person name="Pavlov A."/>
            <person name="Pavlova N."/>
            <person name="Karamychev V."/>
            <person name="Polouchine N."/>
            <person name="Shakhova V."/>
            <person name="Grigoriev I."/>
            <person name="Lou Y."/>
            <person name="Rohksar D."/>
            <person name="Lucas S."/>
            <person name="Huang K."/>
            <person name="Goodstein D.M."/>
            <person name="Hawkins T."/>
            <person name="Plengvidhya V."/>
            <person name="Welker D."/>
            <person name="Hughes J."/>
            <person name="Goh Y."/>
            <person name="Benson A."/>
            <person name="Baldwin K."/>
            <person name="Lee J.-H."/>
            <person name="Diaz-Muniz I."/>
            <person name="Dosti B."/>
            <person name="Smeianov V."/>
            <person name="Wechter W."/>
            <person name="Barabote R."/>
            <person name="Lorca G."/>
            <person name="Altermann E."/>
            <person name="Barrangou R."/>
            <person name="Ganesan B."/>
            <person name="Xie Y."/>
            <person name="Rawsthorne H."/>
            <person name="Tamir D."/>
            <person name="Parker C."/>
            <person name="Breidt F."/>
            <person name="Broadbent J.R."/>
            <person name="Hutkins R."/>
            <person name="O'Sullivan D."/>
            <person name="Steele J."/>
            <person name="Unlu G."/>
            <person name="Saier M.H. Jr."/>
            <person name="Klaenhammer T."/>
            <person name="Richardson P."/>
            <person name="Kozyavkin S."/>
            <person name="Weimer B.C."/>
            <person name="Mills D.A."/>
        </authorList>
    </citation>
    <scope>NUCLEOTIDE SEQUENCE [LARGE SCALE GENOMIC DNA]</scope>
    <source>
        <strain>ATCC 25745 / CCUG 21536 / LMG 10740 / 183-1w</strain>
    </source>
</reference>
<feature type="chain" id="PRO_1000061619" description="UPF0246 protein PEPE_1842">
    <location>
        <begin position="1"/>
        <end position="251"/>
    </location>
</feature>
<comment type="similarity">
    <text evidence="1">Belongs to the UPF0246 family.</text>
</comment>
<dbReference type="EMBL" id="CP000422">
    <property type="protein sequence ID" value="ABJ68861.1"/>
    <property type="molecule type" value="Genomic_DNA"/>
</dbReference>
<dbReference type="RefSeq" id="WP_011673923.1">
    <property type="nucleotide sequence ID" value="NC_008525.1"/>
</dbReference>
<dbReference type="SMR" id="Q03D61"/>
<dbReference type="STRING" id="278197.PEPE_1842"/>
<dbReference type="GeneID" id="33062958"/>
<dbReference type="KEGG" id="ppe:PEPE_1842"/>
<dbReference type="eggNOG" id="COG3022">
    <property type="taxonomic scope" value="Bacteria"/>
</dbReference>
<dbReference type="HOGENOM" id="CLU_061989_1_0_9"/>
<dbReference type="OrthoDB" id="9777133at2"/>
<dbReference type="Proteomes" id="UP000000773">
    <property type="component" value="Chromosome"/>
</dbReference>
<dbReference type="GO" id="GO:0005829">
    <property type="term" value="C:cytosol"/>
    <property type="evidence" value="ECO:0007669"/>
    <property type="project" value="TreeGrafter"/>
</dbReference>
<dbReference type="GO" id="GO:0033194">
    <property type="term" value="P:response to hydroperoxide"/>
    <property type="evidence" value="ECO:0007669"/>
    <property type="project" value="TreeGrafter"/>
</dbReference>
<dbReference type="HAMAP" id="MF_00652">
    <property type="entry name" value="UPF0246"/>
    <property type="match status" value="1"/>
</dbReference>
<dbReference type="InterPro" id="IPR005583">
    <property type="entry name" value="YaaA"/>
</dbReference>
<dbReference type="NCBIfam" id="NF002543">
    <property type="entry name" value="PRK02101.1-4"/>
    <property type="match status" value="1"/>
</dbReference>
<dbReference type="PANTHER" id="PTHR30283:SF4">
    <property type="entry name" value="PEROXIDE STRESS RESISTANCE PROTEIN YAAA"/>
    <property type="match status" value="1"/>
</dbReference>
<dbReference type="PANTHER" id="PTHR30283">
    <property type="entry name" value="PEROXIDE STRESS RESPONSE PROTEIN YAAA"/>
    <property type="match status" value="1"/>
</dbReference>
<dbReference type="Pfam" id="PF03883">
    <property type="entry name" value="H2O2_YaaD"/>
    <property type="match status" value="1"/>
</dbReference>
<evidence type="ECO:0000255" key="1">
    <source>
        <dbReference type="HAMAP-Rule" id="MF_00652"/>
    </source>
</evidence>
<protein>
    <recommendedName>
        <fullName evidence="1">UPF0246 protein PEPE_1842</fullName>
    </recommendedName>
</protein>
<proteinExistence type="inferred from homology"/>
<sequence>MKIIIAPAKKMQVDTDSFDATTMPVYLKQTQKILTMMKQLTYSDLKMLWKCSDKLAQLNYERLQGLDLKYQLTPAIMAYVGIQYQYMAPDLMTEKQLAYIQEHLRILSGFYGVLRPFDGIVPYRLEMQAKLKIDNYNNLCQFWGAKLYQNLYKDNRAVVNLASKEYEKAVRPFLQEDDKMTTCIFGEIIDGKVKQKATPAKEARGEMVNFMALNQVKNTKELKSFDRLNYAYRADLSSADKMVFIKNELHK</sequence>
<organism>
    <name type="scientific">Pediococcus pentosaceus (strain ATCC 25745 / CCUG 21536 / LMG 10740 / 183-1w)</name>
    <dbReference type="NCBI Taxonomy" id="278197"/>
    <lineage>
        <taxon>Bacteria</taxon>
        <taxon>Bacillati</taxon>
        <taxon>Bacillota</taxon>
        <taxon>Bacilli</taxon>
        <taxon>Lactobacillales</taxon>
        <taxon>Lactobacillaceae</taxon>
        <taxon>Pediococcus</taxon>
    </lineage>
</organism>
<gene>
    <name type="ordered locus">PEPE_1842</name>
</gene>
<accession>Q03D61</accession>